<dbReference type="EMBL" id="BC097736">
    <property type="protein sequence ID" value="AAH97736.1"/>
    <property type="status" value="ALT_INIT"/>
    <property type="molecule type" value="mRNA"/>
</dbReference>
<dbReference type="RefSeq" id="NP_001089498.2">
    <property type="nucleotide sequence ID" value="NM_001096029.1"/>
</dbReference>
<dbReference type="SMR" id="Q4QR06"/>
<dbReference type="DNASU" id="734550"/>
<dbReference type="GeneID" id="734550"/>
<dbReference type="KEGG" id="xla:734550"/>
<dbReference type="AGR" id="Xenbase:XB-GENE-6255892"/>
<dbReference type="CTD" id="734550"/>
<dbReference type="Xenbase" id="XB-GENE-6255892">
    <property type="gene designation" value="pcgf1.L"/>
</dbReference>
<dbReference type="OrthoDB" id="1305878at2759"/>
<dbReference type="Proteomes" id="UP000186698">
    <property type="component" value="Chromosome 1L"/>
</dbReference>
<dbReference type="Bgee" id="734550">
    <property type="expression patterns" value="Expressed in oocyte and 19 other cell types or tissues"/>
</dbReference>
<dbReference type="GO" id="GO:0031519">
    <property type="term" value="C:PcG protein complex"/>
    <property type="evidence" value="ECO:0000250"/>
    <property type="project" value="UniProtKB"/>
</dbReference>
<dbReference type="GO" id="GO:0035102">
    <property type="term" value="C:PRC1 complex"/>
    <property type="evidence" value="ECO:0000318"/>
    <property type="project" value="GO_Central"/>
</dbReference>
<dbReference type="GO" id="GO:1990841">
    <property type="term" value="F:promoter-specific chromatin binding"/>
    <property type="evidence" value="ECO:0000318"/>
    <property type="project" value="GO_Central"/>
</dbReference>
<dbReference type="GO" id="GO:0008270">
    <property type="term" value="F:zinc ion binding"/>
    <property type="evidence" value="ECO:0007669"/>
    <property type="project" value="UniProtKB-KW"/>
</dbReference>
<dbReference type="GO" id="GO:0006338">
    <property type="term" value="P:chromatin remodeling"/>
    <property type="evidence" value="ECO:0000250"/>
    <property type="project" value="UniProtKB"/>
</dbReference>
<dbReference type="GO" id="GO:0000122">
    <property type="term" value="P:negative regulation of transcription by RNA polymerase II"/>
    <property type="evidence" value="ECO:0000318"/>
    <property type="project" value="GO_Central"/>
</dbReference>
<dbReference type="CDD" id="cd17081">
    <property type="entry name" value="RAWUL_PCGF1"/>
    <property type="match status" value="1"/>
</dbReference>
<dbReference type="CDD" id="cd16733">
    <property type="entry name" value="RING-HC_PCGF1"/>
    <property type="match status" value="1"/>
</dbReference>
<dbReference type="FunFam" id="3.10.20.90:FF:000099">
    <property type="entry name" value="Polycomb group RING finger protein 1"/>
    <property type="match status" value="1"/>
</dbReference>
<dbReference type="FunFam" id="3.30.40.10:FF:000122">
    <property type="entry name" value="polycomb group RING finger protein 1"/>
    <property type="match status" value="1"/>
</dbReference>
<dbReference type="Gene3D" id="3.10.20.90">
    <property type="entry name" value="Phosphatidylinositol 3-kinase Catalytic Subunit, Chain A, domain 1"/>
    <property type="match status" value="1"/>
</dbReference>
<dbReference type="Gene3D" id="3.30.40.10">
    <property type="entry name" value="Zinc/RING finger domain, C3HC4 (zinc finger)"/>
    <property type="match status" value="1"/>
</dbReference>
<dbReference type="InterPro" id="IPR032443">
    <property type="entry name" value="RAWUL"/>
</dbReference>
<dbReference type="InterPro" id="IPR001841">
    <property type="entry name" value="Znf_RING"/>
</dbReference>
<dbReference type="InterPro" id="IPR013083">
    <property type="entry name" value="Znf_RING/FYVE/PHD"/>
</dbReference>
<dbReference type="InterPro" id="IPR017907">
    <property type="entry name" value="Znf_RING_CS"/>
</dbReference>
<dbReference type="PANTHER" id="PTHR10825:SF29">
    <property type="entry name" value="POLYCOMB GROUP RING FINGER PROTEIN 1"/>
    <property type="match status" value="1"/>
</dbReference>
<dbReference type="PANTHER" id="PTHR10825">
    <property type="entry name" value="RING FINGER DOMAIN-CONTAINING, POLYCOMB GROUP COMPONENT"/>
    <property type="match status" value="1"/>
</dbReference>
<dbReference type="Pfam" id="PF16207">
    <property type="entry name" value="RAWUL"/>
    <property type="match status" value="1"/>
</dbReference>
<dbReference type="Pfam" id="PF13923">
    <property type="entry name" value="zf-C3HC4_2"/>
    <property type="match status" value="1"/>
</dbReference>
<dbReference type="SMART" id="SM00184">
    <property type="entry name" value="RING"/>
    <property type="match status" value="1"/>
</dbReference>
<dbReference type="SUPFAM" id="SSF57850">
    <property type="entry name" value="RING/U-box"/>
    <property type="match status" value="1"/>
</dbReference>
<dbReference type="PROSITE" id="PS00518">
    <property type="entry name" value="ZF_RING_1"/>
    <property type="match status" value="1"/>
</dbReference>
<dbReference type="PROSITE" id="PS50089">
    <property type="entry name" value="ZF_RING_2"/>
    <property type="match status" value="1"/>
</dbReference>
<sequence>MASQGPLVIAMRLRNQLQSVYKMDPLRNEEVVKVKIKELNEHIVCYLCAGYFIDATTITECLHTFCKSCIVKYLQTSKYCPLCNIKIHETQPLLNLKLDRVMQDIVYKLVPGLQENEDSRIRDFYHSRGLERVLQPSAVEDSVGDVSQLSLSLAVSQKTSHYYRNDEHVCLCLEKVSSGKDKKKFILQQKYVRCSVRSEIRHLRRVLSHRLSAPLAQVQLLIDNKVLPDHMTMKQLWLMHWYGKPAPLVLLYSVKEKRR</sequence>
<keyword id="KW-0479">Metal-binding</keyword>
<keyword id="KW-0539">Nucleus</keyword>
<keyword id="KW-1185">Reference proteome</keyword>
<keyword id="KW-0678">Repressor</keyword>
<keyword id="KW-0804">Transcription</keyword>
<keyword id="KW-0805">Transcription regulation</keyword>
<keyword id="KW-0862">Zinc</keyword>
<keyword id="KW-0863">Zinc-finger</keyword>
<comment type="function">
    <text evidence="1">Component of a Polycomb group (PcG) multiprotein PRC1-like complex, a complex class required to maintain the transcriptionally repressive state of many genes, including Hox genes, throughout development. PcG PRC1 complex acts via chromatin remodeling and modification of histones; it mediates monoubiquitination of histone H2A 'Lys-119', rendering chromatin heritably changed in its expressibility.</text>
</comment>
<comment type="subunit">
    <text evidence="1">Component of a PRC1-like complex.</text>
</comment>
<comment type="subcellular location">
    <subcellularLocation>
        <location evidence="1">Nucleus</location>
    </subcellularLocation>
</comment>
<comment type="sequence caution" evidence="3">
    <conflict type="erroneous initiation">
        <sequence resource="EMBL-CDS" id="AAH97736"/>
    </conflict>
</comment>
<evidence type="ECO:0000250" key="1">
    <source>
        <dbReference type="UniProtKB" id="Q9BSM1"/>
    </source>
</evidence>
<evidence type="ECO:0000255" key="2">
    <source>
        <dbReference type="PROSITE-ProRule" id="PRU00175"/>
    </source>
</evidence>
<evidence type="ECO:0000305" key="3"/>
<name>PCGF1_XENLA</name>
<reference key="1">
    <citation type="submission" date="2005-06" db="EMBL/GenBank/DDBJ databases">
        <authorList>
            <consortium name="NIH - Xenopus Gene Collection (XGC) project"/>
        </authorList>
    </citation>
    <scope>NUCLEOTIDE SEQUENCE [LARGE SCALE MRNA]</scope>
    <source>
        <tissue>Egg</tissue>
    </source>
</reference>
<protein>
    <recommendedName>
        <fullName>Polycomb group RING finger protein 1</fullName>
    </recommendedName>
</protein>
<gene>
    <name type="primary">pcgf1</name>
</gene>
<feature type="chain" id="PRO_0000277859" description="Polycomb group RING finger protein 1">
    <location>
        <begin position="1"/>
        <end position="259"/>
    </location>
</feature>
<feature type="zinc finger region" description="RING-type" evidence="2">
    <location>
        <begin position="45"/>
        <end position="84"/>
    </location>
</feature>
<proteinExistence type="evidence at transcript level"/>
<organism>
    <name type="scientific">Xenopus laevis</name>
    <name type="common">African clawed frog</name>
    <dbReference type="NCBI Taxonomy" id="8355"/>
    <lineage>
        <taxon>Eukaryota</taxon>
        <taxon>Metazoa</taxon>
        <taxon>Chordata</taxon>
        <taxon>Craniata</taxon>
        <taxon>Vertebrata</taxon>
        <taxon>Euteleostomi</taxon>
        <taxon>Amphibia</taxon>
        <taxon>Batrachia</taxon>
        <taxon>Anura</taxon>
        <taxon>Pipoidea</taxon>
        <taxon>Pipidae</taxon>
        <taxon>Xenopodinae</taxon>
        <taxon>Xenopus</taxon>
        <taxon>Xenopus</taxon>
    </lineage>
</organism>
<accession>Q4QR06</accession>